<proteinExistence type="inferred from homology"/>
<reference key="1">
    <citation type="journal article" date="2004" name="Nature">
        <title>Genome evolution in yeasts.</title>
        <authorList>
            <person name="Dujon B."/>
            <person name="Sherman D."/>
            <person name="Fischer G."/>
            <person name="Durrens P."/>
            <person name="Casaregola S."/>
            <person name="Lafontaine I."/>
            <person name="de Montigny J."/>
            <person name="Marck C."/>
            <person name="Neuveglise C."/>
            <person name="Talla E."/>
            <person name="Goffard N."/>
            <person name="Frangeul L."/>
            <person name="Aigle M."/>
            <person name="Anthouard V."/>
            <person name="Babour A."/>
            <person name="Barbe V."/>
            <person name="Barnay S."/>
            <person name="Blanchin S."/>
            <person name="Beckerich J.-M."/>
            <person name="Beyne E."/>
            <person name="Bleykasten C."/>
            <person name="Boisrame A."/>
            <person name="Boyer J."/>
            <person name="Cattolico L."/>
            <person name="Confanioleri F."/>
            <person name="de Daruvar A."/>
            <person name="Despons L."/>
            <person name="Fabre E."/>
            <person name="Fairhead C."/>
            <person name="Ferry-Dumazet H."/>
            <person name="Groppi A."/>
            <person name="Hantraye F."/>
            <person name="Hennequin C."/>
            <person name="Jauniaux N."/>
            <person name="Joyet P."/>
            <person name="Kachouri R."/>
            <person name="Kerrest A."/>
            <person name="Koszul R."/>
            <person name="Lemaire M."/>
            <person name="Lesur I."/>
            <person name="Ma L."/>
            <person name="Muller H."/>
            <person name="Nicaud J.-M."/>
            <person name="Nikolski M."/>
            <person name="Oztas S."/>
            <person name="Ozier-Kalogeropoulos O."/>
            <person name="Pellenz S."/>
            <person name="Potier S."/>
            <person name="Richard G.-F."/>
            <person name="Straub M.-L."/>
            <person name="Suleau A."/>
            <person name="Swennen D."/>
            <person name="Tekaia F."/>
            <person name="Wesolowski-Louvel M."/>
            <person name="Westhof E."/>
            <person name="Wirth B."/>
            <person name="Zeniou-Meyer M."/>
            <person name="Zivanovic Y."/>
            <person name="Bolotin-Fukuhara M."/>
            <person name="Thierry A."/>
            <person name="Bouchier C."/>
            <person name="Caudron B."/>
            <person name="Scarpelli C."/>
            <person name="Gaillardin C."/>
            <person name="Weissenbach J."/>
            <person name="Wincker P."/>
            <person name="Souciet J.-L."/>
        </authorList>
    </citation>
    <scope>NUCLEOTIDE SEQUENCE [LARGE SCALE GENOMIC DNA]</scope>
    <source>
        <strain>ATCC 2001 / BCRC 20586 / JCM 3761 / NBRC 0622 / NRRL Y-65 / CBS 138</strain>
    </source>
</reference>
<name>SEC22_CANGA</name>
<feature type="chain" id="PRO_0000206765" description="Protein transport protein SEC22">
    <location>
        <begin position="1"/>
        <end position="215"/>
    </location>
</feature>
<feature type="topological domain" description="Cytoplasmic" evidence="2">
    <location>
        <begin position="1"/>
        <end position="193"/>
    </location>
</feature>
<feature type="transmembrane region" description="Helical; Anchor for type IV membrane protein" evidence="2">
    <location>
        <begin position="194"/>
        <end position="214"/>
    </location>
</feature>
<feature type="topological domain" description="Vesicular" evidence="2">
    <location>
        <position position="215"/>
    </location>
</feature>
<feature type="domain" description="Longin" evidence="3">
    <location>
        <begin position="6"/>
        <end position="118"/>
    </location>
</feature>
<feature type="domain" description="v-SNARE coiled-coil homology" evidence="4">
    <location>
        <begin position="133"/>
        <end position="193"/>
    </location>
</feature>
<comment type="function">
    <text evidence="1">Required for transport from the ER to the Golgi complex.</text>
</comment>
<comment type="subcellular location">
    <subcellularLocation>
        <location evidence="5">Membrane</location>
        <topology evidence="5">Single-pass type IV membrane protein</topology>
    </subcellularLocation>
    <subcellularLocation>
        <location evidence="5">Endoplasmic reticulum membrane</location>
        <topology evidence="5">Single-pass type IV membrane protein</topology>
    </subcellularLocation>
    <subcellularLocation>
        <location evidence="5">Golgi apparatus membrane</location>
        <topology evidence="5">Single-pass type IV membrane protein</topology>
    </subcellularLocation>
</comment>
<comment type="similarity">
    <text evidence="5">Belongs to the synaptobrevin family.</text>
</comment>
<dbReference type="EMBL" id="CR380949">
    <property type="protein sequence ID" value="CAG58220.1"/>
    <property type="molecule type" value="Genomic_DNA"/>
</dbReference>
<dbReference type="RefSeq" id="XP_445314.1">
    <property type="nucleotide sequence ID" value="XM_445314.1"/>
</dbReference>
<dbReference type="SMR" id="Q6FWT0"/>
<dbReference type="FunCoup" id="Q6FWT0">
    <property type="interactions" value="1100"/>
</dbReference>
<dbReference type="STRING" id="284593.Q6FWT0"/>
<dbReference type="EnsemblFungi" id="CAGL0C03179g-T">
    <property type="protein sequence ID" value="CAGL0C03179g-T-p1"/>
    <property type="gene ID" value="CAGL0C03179g"/>
</dbReference>
<dbReference type="KEGG" id="cgr:2886888"/>
<dbReference type="CGD" id="CAL0127430">
    <property type="gene designation" value="CAGL0C03179g"/>
</dbReference>
<dbReference type="VEuPathDB" id="FungiDB:B1J91_C03179g"/>
<dbReference type="VEuPathDB" id="FungiDB:CAGL0C03179g"/>
<dbReference type="eggNOG" id="KOG0862">
    <property type="taxonomic scope" value="Eukaryota"/>
</dbReference>
<dbReference type="HOGENOM" id="CLU_054453_4_0_1"/>
<dbReference type="InParanoid" id="Q6FWT0"/>
<dbReference type="OMA" id="FIYWRFF"/>
<dbReference type="Proteomes" id="UP000002428">
    <property type="component" value="Chromosome C"/>
</dbReference>
<dbReference type="GO" id="GO:0005789">
    <property type="term" value="C:endoplasmic reticulum membrane"/>
    <property type="evidence" value="ECO:0007669"/>
    <property type="project" value="UniProtKB-SubCell"/>
</dbReference>
<dbReference type="GO" id="GO:0012507">
    <property type="term" value="C:ER to Golgi transport vesicle membrane"/>
    <property type="evidence" value="ECO:0007669"/>
    <property type="project" value="EnsemblFungi"/>
</dbReference>
<dbReference type="GO" id="GO:0000139">
    <property type="term" value="C:Golgi membrane"/>
    <property type="evidence" value="ECO:0007669"/>
    <property type="project" value="UniProtKB-SubCell"/>
</dbReference>
<dbReference type="GO" id="GO:0031201">
    <property type="term" value="C:SNARE complex"/>
    <property type="evidence" value="ECO:0007669"/>
    <property type="project" value="EnsemblFungi"/>
</dbReference>
<dbReference type="GO" id="GO:0005484">
    <property type="term" value="F:SNAP receptor activity"/>
    <property type="evidence" value="ECO:0007669"/>
    <property type="project" value="EnsemblFungi"/>
</dbReference>
<dbReference type="GO" id="GO:0006888">
    <property type="term" value="P:endoplasmic reticulum to Golgi vesicle-mediated transport"/>
    <property type="evidence" value="ECO:0007669"/>
    <property type="project" value="EnsemblFungi"/>
</dbReference>
<dbReference type="GO" id="GO:0006886">
    <property type="term" value="P:intracellular protein transport"/>
    <property type="evidence" value="ECO:0007669"/>
    <property type="project" value="EnsemblFungi"/>
</dbReference>
<dbReference type="GO" id="GO:0006890">
    <property type="term" value="P:retrograde vesicle-mediated transport, Golgi to endoplasmic reticulum"/>
    <property type="evidence" value="ECO:0007669"/>
    <property type="project" value="EnsemblFungi"/>
</dbReference>
<dbReference type="GO" id="GO:0048280">
    <property type="term" value="P:vesicle fusion with Golgi apparatus"/>
    <property type="evidence" value="ECO:0007669"/>
    <property type="project" value="EnsemblFungi"/>
</dbReference>
<dbReference type="CDD" id="cd14824">
    <property type="entry name" value="Longin"/>
    <property type="match status" value="1"/>
</dbReference>
<dbReference type="CDD" id="cd15866">
    <property type="entry name" value="R-SNARE_SEC22"/>
    <property type="match status" value="1"/>
</dbReference>
<dbReference type="FunFam" id="1.20.5.110:FF:000065">
    <property type="entry name" value="SEC22 (YLR268W)"/>
    <property type="match status" value="1"/>
</dbReference>
<dbReference type="Gene3D" id="1.20.5.110">
    <property type="match status" value="1"/>
</dbReference>
<dbReference type="Gene3D" id="3.30.450.50">
    <property type="entry name" value="Longin domain"/>
    <property type="match status" value="1"/>
</dbReference>
<dbReference type="InterPro" id="IPR011012">
    <property type="entry name" value="Longin-like_dom_sf"/>
</dbReference>
<dbReference type="InterPro" id="IPR010908">
    <property type="entry name" value="Longin_dom"/>
</dbReference>
<dbReference type="InterPro" id="IPR044565">
    <property type="entry name" value="Sec22"/>
</dbReference>
<dbReference type="InterPro" id="IPR042855">
    <property type="entry name" value="V_SNARE_CC"/>
</dbReference>
<dbReference type="PANTHER" id="PTHR45837">
    <property type="entry name" value="VESICLE-TRAFFICKING PROTEIN SEC22B"/>
    <property type="match status" value="1"/>
</dbReference>
<dbReference type="Pfam" id="PF13774">
    <property type="entry name" value="Longin"/>
    <property type="match status" value="1"/>
</dbReference>
<dbReference type="Pfam" id="PF00957">
    <property type="entry name" value="Synaptobrevin"/>
    <property type="match status" value="1"/>
</dbReference>
<dbReference type="SMART" id="SM01270">
    <property type="entry name" value="Longin"/>
    <property type="match status" value="1"/>
</dbReference>
<dbReference type="SUPFAM" id="SSF58038">
    <property type="entry name" value="SNARE fusion complex"/>
    <property type="match status" value="1"/>
</dbReference>
<dbReference type="SUPFAM" id="SSF64356">
    <property type="entry name" value="SNARE-like"/>
    <property type="match status" value="1"/>
</dbReference>
<dbReference type="PROSITE" id="PS50859">
    <property type="entry name" value="LONGIN"/>
    <property type="match status" value="1"/>
</dbReference>
<dbReference type="PROSITE" id="PS50892">
    <property type="entry name" value="V_SNARE"/>
    <property type="match status" value="1"/>
</dbReference>
<evidence type="ECO:0000250" key="1"/>
<evidence type="ECO:0000255" key="2"/>
<evidence type="ECO:0000255" key="3">
    <source>
        <dbReference type="PROSITE-ProRule" id="PRU00231"/>
    </source>
</evidence>
<evidence type="ECO:0000255" key="4">
    <source>
        <dbReference type="PROSITE-ProRule" id="PRU00290"/>
    </source>
</evidence>
<evidence type="ECO:0000305" key="5"/>
<accession>Q6FWT0</accession>
<gene>
    <name type="primary">SEC22</name>
    <name type="ordered locus">CAGL0C03179g</name>
</gene>
<keyword id="KW-0175">Coiled coil</keyword>
<keyword id="KW-0256">Endoplasmic reticulum</keyword>
<keyword id="KW-0931">ER-Golgi transport</keyword>
<keyword id="KW-0333">Golgi apparatus</keyword>
<keyword id="KW-0472">Membrane</keyword>
<keyword id="KW-0653">Protein transport</keyword>
<keyword id="KW-1185">Reference proteome</keyword>
<keyword id="KW-0812">Transmembrane</keyword>
<keyword id="KW-1133">Transmembrane helix</keyword>
<keyword id="KW-0813">Transport</keyword>
<protein>
    <recommendedName>
        <fullName>Protein transport protein SEC22</fullName>
    </recommendedName>
</protein>
<organism>
    <name type="scientific">Candida glabrata (strain ATCC 2001 / BCRC 20586 / JCM 3761 / NBRC 0622 / NRRL Y-65 / CBS 138)</name>
    <name type="common">Yeast</name>
    <name type="synonym">Nakaseomyces glabratus</name>
    <dbReference type="NCBI Taxonomy" id="284593"/>
    <lineage>
        <taxon>Eukaryota</taxon>
        <taxon>Fungi</taxon>
        <taxon>Dikarya</taxon>
        <taxon>Ascomycota</taxon>
        <taxon>Saccharomycotina</taxon>
        <taxon>Saccharomycetes</taxon>
        <taxon>Saccharomycetales</taxon>
        <taxon>Saccharomycetaceae</taxon>
        <taxon>Nakaseomyces</taxon>
    </lineage>
</organism>
<sequence>MIKSTVVYRDDGLPLCSSVDDDISDLSLNEQKKRIKMVVSRMTPQSANEATLESKDSEIHYIRQQGVIYFVICEAGYPRNLAFSYLNDVAVEFQHSYSNELSKPTIRPYAFASFDTFLQRTKKAYSDKKVQDNLDQLNQELVGVKQIMSKNIEDLLYRGDSLEKMDDMSNSLKISSKKYRKSAQKINFDLLISQYAPIVMVAFFFVFLFWWVFLR</sequence>